<reference key="1">
    <citation type="journal article" date="2002" name="Nature">
        <title>The genome sequence of Schizosaccharomyces pombe.</title>
        <authorList>
            <person name="Wood V."/>
            <person name="Gwilliam R."/>
            <person name="Rajandream M.A."/>
            <person name="Lyne M.H."/>
            <person name="Lyne R."/>
            <person name="Stewart A."/>
            <person name="Sgouros J.G."/>
            <person name="Peat N."/>
            <person name="Hayles J."/>
            <person name="Baker S.G."/>
            <person name="Basham D."/>
            <person name="Bowman S."/>
            <person name="Brooks K."/>
            <person name="Brown D."/>
            <person name="Brown S."/>
            <person name="Chillingworth T."/>
            <person name="Churcher C.M."/>
            <person name="Collins M."/>
            <person name="Connor R."/>
            <person name="Cronin A."/>
            <person name="Davis P."/>
            <person name="Feltwell T."/>
            <person name="Fraser A."/>
            <person name="Gentles S."/>
            <person name="Goble A."/>
            <person name="Hamlin N."/>
            <person name="Harris D.E."/>
            <person name="Hidalgo J."/>
            <person name="Hodgson G."/>
            <person name="Holroyd S."/>
            <person name="Hornsby T."/>
            <person name="Howarth S."/>
            <person name="Huckle E.J."/>
            <person name="Hunt S."/>
            <person name="Jagels K."/>
            <person name="James K.D."/>
            <person name="Jones L."/>
            <person name="Jones M."/>
            <person name="Leather S."/>
            <person name="McDonald S."/>
            <person name="McLean J."/>
            <person name="Mooney P."/>
            <person name="Moule S."/>
            <person name="Mungall K.L."/>
            <person name="Murphy L.D."/>
            <person name="Niblett D."/>
            <person name="Odell C."/>
            <person name="Oliver K."/>
            <person name="O'Neil S."/>
            <person name="Pearson D."/>
            <person name="Quail M.A."/>
            <person name="Rabbinowitsch E."/>
            <person name="Rutherford K.M."/>
            <person name="Rutter S."/>
            <person name="Saunders D."/>
            <person name="Seeger K."/>
            <person name="Sharp S."/>
            <person name="Skelton J."/>
            <person name="Simmonds M.N."/>
            <person name="Squares R."/>
            <person name="Squares S."/>
            <person name="Stevens K."/>
            <person name="Taylor K."/>
            <person name="Taylor R.G."/>
            <person name="Tivey A."/>
            <person name="Walsh S.V."/>
            <person name="Warren T."/>
            <person name="Whitehead S."/>
            <person name="Woodward J.R."/>
            <person name="Volckaert G."/>
            <person name="Aert R."/>
            <person name="Robben J."/>
            <person name="Grymonprez B."/>
            <person name="Weltjens I."/>
            <person name="Vanstreels E."/>
            <person name="Rieger M."/>
            <person name="Schaefer M."/>
            <person name="Mueller-Auer S."/>
            <person name="Gabel C."/>
            <person name="Fuchs M."/>
            <person name="Duesterhoeft A."/>
            <person name="Fritzc C."/>
            <person name="Holzer E."/>
            <person name="Moestl D."/>
            <person name="Hilbert H."/>
            <person name="Borzym K."/>
            <person name="Langer I."/>
            <person name="Beck A."/>
            <person name="Lehrach H."/>
            <person name="Reinhardt R."/>
            <person name="Pohl T.M."/>
            <person name="Eger P."/>
            <person name="Zimmermann W."/>
            <person name="Wedler H."/>
            <person name="Wambutt R."/>
            <person name="Purnelle B."/>
            <person name="Goffeau A."/>
            <person name="Cadieu E."/>
            <person name="Dreano S."/>
            <person name="Gloux S."/>
            <person name="Lelaure V."/>
            <person name="Mottier S."/>
            <person name="Galibert F."/>
            <person name="Aves S.J."/>
            <person name="Xiang Z."/>
            <person name="Hunt C."/>
            <person name="Moore K."/>
            <person name="Hurst S.M."/>
            <person name="Lucas M."/>
            <person name="Rochet M."/>
            <person name="Gaillardin C."/>
            <person name="Tallada V.A."/>
            <person name="Garzon A."/>
            <person name="Thode G."/>
            <person name="Daga R.R."/>
            <person name="Cruzado L."/>
            <person name="Jimenez J."/>
            <person name="Sanchez M."/>
            <person name="del Rey F."/>
            <person name="Benito J."/>
            <person name="Dominguez A."/>
            <person name="Revuelta J.L."/>
            <person name="Moreno S."/>
            <person name="Armstrong J."/>
            <person name="Forsburg S.L."/>
            <person name="Cerutti L."/>
            <person name="Lowe T."/>
            <person name="McCombie W.R."/>
            <person name="Paulsen I."/>
            <person name="Potashkin J."/>
            <person name="Shpakovski G.V."/>
            <person name="Ussery D."/>
            <person name="Barrell B.G."/>
            <person name="Nurse P."/>
        </authorList>
    </citation>
    <scope>NUCLEOTIDE SEQUENCE [LARGE SCALE GENOMIC DNA]</scope>
    <source>
        <strain>972 / ATCC 24843</strain>
    </source>
</reference>
<reference key="2">
    <citation type="journal article" date="2006" name="Nat. Biotechnol.">
        <title>ORFeome cloning and global analysis of protein localization in the fission yeast Schizosaccharomyces pombe.</title>
        <authorList>
            <person name="Matsuyama A."/>
            <person name="Arai R."/>
            <person name="Yashiroda Y."/>
            <person name="Shirai A."/>
            <person name="Kamata A."/>
            <person name="Sekido S."/>
            <person name="Kobayashi Y."/>
            <person name="Hashimoto A."/>
            <person name="Hamamoto M."/>
            <person name="Hiraoka Y."/>
            <person name="Horinouchi S."/>
            <person name="Yoshida M."/>
        </authorList>
    </citation>
    <scope>SUBCELLULAR LOCATION [LARGE SCALE ANALYSIS]</scope>
</reference>
<evidence type="ECO:0000250" key="1"/>
<evidence type="ECO:0000255" key="2">
    <source>
        <dbReference type="PROSITE-ProRule" id="PRU00568"/>
    </source>
</evidence>
<evidence type="ECO:0000269" key="3">
    <source>
    </source>
</evidence>
<evidence type="ECO:0000305" key="4"/>
<sequence>MSSTKKDIKVYVNYRDEYAEPKIISALKNSGKELTFTNSAKEANFQWAQYEDIDFDEVYKNPKTKLCCSYVIRKALIRKEYLWRTVITYLAKHPDSILSKSVPEAYSLELDYAEFLDDSLMEAYELRQELEENATKNISEKQWYILKPSMCDRAQGIRLFSTIEELQAIFDSFDDEESESEEAGLEEKGDITVAFNNKIVISQIRNFLVQKYISKPLLLDHRKFHIRAYVLATGALSVYLFNEMLCLLARDKYKKPTPDPDLLFSHLSNTCLQGDNVEQSSIRDFWNTSIENKDDIFKSILNIIGDVFEAAATTQGIHFQPLENCFEIFGVDFLVDCESQVYLLEVNSYPDFKQTGKNLSNIIENLFSAVVETAIIPFFESSTKRNVDSKLTLAKKLQLFGFR</sequence>
<gene>
    <name type="ORF">SPAC12B10.04</name>
</gene>
<organism>
    <name type="scientific">Schizosaccharomyces pombe (strain 972 / ATCC 24843)</name>
    <name type="common">Fission yeast</name>
    <dbReference type="NCBI Taxonomy" id="284812"/>
    <lineage>
        <taxon>Eukaryota</taxon>
        <taxon>Fungi</taxon>
        <taxon>Dikarya</taxon>
        <taxon>Ascomycota</taxon>
        <taxon>Taphrinomycotina</taxon>
        <taxon>Schizosaccharomycetes</taxon>
        <taxon>Schizosaccharomycetales</taxon>
        <taxon>Schizosaccharomycetaceae</taxon>
        <taxon>Schizosaccharomyces</taxon>
    </lineage>
</organism>
<accession>Q10438</accession>
<comment type="function">
    <text evidence="1">Probable tubulin--tyrosine ligase.</text>
</comment>
<comment type="catalytic activity">
    <reaction>
        <text>C-terminal L-alpha-aminoacyl-L-glutamyl-L-glutamyl-[tubulin] + L-tyrosine + ATP = C-terminal L-alpha-aminoacyl-L-glutamyl-L-glutamyl-L-tyrosyl-[tubulin] + ADP + phosphate + H(+)</text>
        <dbReference type="Rhea" id="RHEA:17605"/>
        <dbReference type="Rhea" id="RHEA-COMP:16434"/>
        <dbReference type="Rhea" id="RHEA-COMP:16435"/>
        <dbReference type="ChEBI" id="CHEBI:15378"/>
        <dbReference type="ChEBI" id="CHEBI:30616"/>
        <dbReference type="ChEBI" id="CHEBI:43474"/>
        <dbReference type="ChEBI" id="CHEBI:58315"/>
        <dbReference type="ChEBI" id="CHEBI:149554"/>
        <dbReference type="ChEBI" id="CHEBI:149555"/>
        <dbReference type="ChEBI" id="CHEBI:456216"/>
        <dbReference type="EC" id="6.3.2.25"/>
    </reaction>
</comment>
<comment type="cofactor">
    <cofactor evidence="1">
        <name>Mg(2+)</name>
        <dbReference type="ChEBI" id="CHEBI:18420"/>
    </cofactor>
</comment>
<comment type="cofactor">
    <cofactor evidence="1">
        <name>K(+)</name>
        <dbReference type="ChEBI" id="CHEBI:29103"/>
    </cofactor>
</comment>
<comment type="subcellular location">
    <subcellularLocation>
        <location evidence="3">Cytoplasm</location>
    </subcellularLocation>
    <subcellularLocation>
        <location evidence="3">Nucleus</location>
    </subcellularLocation>
</comment>
<comment type="similarity">
    <text evidence="4">Belongs to the tubulin--tyrosine ligase family.</text>
</comment>
<feature type="chain" id="PRO_0000212447" description="Probable tubulin--tyrosine ligase C12B10.04">
    <location>
        <begin position="1"/>
        <end position="403"/>
    </location>
</feature>
<feature type="domain" description="TTL" evidence="2">
    <location>
        <begin position="9"/>
        <end position="386"/>
    </location>
</feature>
<proteinExistence type="inferred from homology"/>
<protein>
    <recommendedName>
        <fullName>Probable tubulin--tyrosine ligase C12B10.04</fullName>
        <ecNumber>6.3.2.25</ecNumber>
    </recommendedName>
</protein>
<dbReference type="EC" id="6.3.2.25"/>
<dbReference type="EMBL" id="CU329670">
    <property type="protein sequence ID" value="CAA94694.1"/>
    <property type="molecule type" value="Genomic_DNA"/>
</dbReference>
<dbReference type="PIR" id="T37571">
    <property type="entry name" value="T37571"/>
</dbReference>
<dbReference type="SMR" id="Q10438"/>
<dbReference type="BioGRID" id="279365">
    <property type="interactions" value="31"/>
</dbReference>
<dbReference type="FunCoup" id="Q10438">
    <property type="interactions" value="12"/>
</dbReference>
<dbReference type="STRING" id="284812.Q10438"/>
<dbReference type="iPTMnet" id="Q10438"/>
<dbReference type="PaxDb" id="4896-SPAC12B10.04.1"/>
<dbReference type="EnsemblFungi" id="SPAC12B10.04.1">
    <property type="protein sequence ID" value="SPAC12B10.04.1:pep"/>
    <property type="gene ID" value="SPAC12B10.04"/>
</dbReference>
<dbReference type="KEGG" id="spo:2542924"/>
<dbReference type="PomBase" id="SPAC12B10.04"/>
<dbReference type="VEuPathDB" id="FungiDB:SPAC12B10.04"/>
<dbReference type="eggNOG" id="KOG2157">
    <property type="taxonomic scope" value="Eukaryota"/>
</dbReference>
<dbReference type="HOGENOM" id="CLU_031301_0_0_1"/>
<dbReference type="InParanoid" id="Q10438"/>
<dbReference type="OMA" id="LARKDHM"/>
<dbReference type="PhylomeDB" id="Q10438"/>
<dbReference type="PRO" id="PR:Q10438"/>
<dbReference type="Proteomes" id="UP000002485">
    <property type="component" value="Chromosome I"/>
</dbReference>
<dbReference type="GO" id="GO:0005829">
    <property type="term" value="C:cytosol"/>
    <property type="evidence" value="ECO:0007005"/>
    <property type="project" value="PomBase"/>
</dbReference>
<dbReference type="GO" id="GO:0005634">
    <property type="term" value="C:nucleus"/>
    <property type="evidence" value="ECO:0007005"/>
    <property type="project" value="PomBase"/>
</dbReference>
<dbReference type="GO" id="GO:0000932">
    <property type="term" value="C:P-body"/>
    <property type="evidence" value="ECO:0000318"/>
    <property type="project" value="GO_Central"/>
</dbReference>
<dbReference type="GO" id="GO:0004835">
    <property type="term" value="F:tubulin-tyrosine ligase activity"/>
    <property type="evidence" value="ECO:0007669"/>
    <property type="project" value="UniProtKB-EC"/>
</dbReference>
<dbReference type="GO" id="GO:0036211">
    <property type="term" value="P:protein modification process"/>
    <property type="evidence" value="ECO:0007669"/>
    <property type="project" value="InterPro"/>
</dbReference>
<dbReference type="Gene3D" id="3.30.470.20">
    <property type="entry name" value="ATP-grasp fold, B domain"/>
    <property type="match status" value="1"/>
</dbReference>
<dbReference type="InterPro" id="IPR027746">
    <property type="entry name" value="TTL"/>
</dbReference>
<dbReference type="InterPro" id="IPR004344">
    <property type="entry name" value="TTL/TTLL_fam"/>
</dbReference>
<dbReference type="PANTHER" id="PTHR47551">
    <property type="entry name" value="TUBULIN--TYROSINE LIGASE PBY1-RELATED"/>
    <property type="match status" value="1"/>
</dbReference>
<dbReference type="PANTHER" id="PTHR47551:SF1">
    <property type="entry name" value="TUBULIN--TYROSINE LIGASE PBY1-RELATED"/>
    <property type="match status" value="1"/>
</dbReference>
<dbReference type="Pfam" id="PF03133">
    <property type="entry name" value="TTL"/>
    <property type="match status" value="1"/>
</dbReference>
<dbReference type="SUPFAM" id="SSF56059">
    <property type="entry name" value="Glutathione synthetase ATP-binding domain-like"/>
    <property type="match status" value="1"/>
</dbReference>
<dbReference type="PROSITE" id="PS51221">
    <property type="entry name" value="TTL"/>
    <property type="match status" value="1"/>
</dbReference>
<keyword id="KW-0963">Cytoplasm</keyword>
<keyword id="KW-0436">Ligase</keyword>
<keyword id="KW-0460">Magnesium</keyword>
<keyword id="KW-0539">Nucleus</keyword>
<keyword id="KW-0630">Potassium</keyword>
<keyword id="KW-1185">Reference proteome</keyword>
<name>TTL_SCHPO</name>